<accession>B6GX67</accession>
<proteinExistence type="inferred from homology"/>
<evidence type="ECO:0000255" key="1">
    <source>
        <dbReference type="HAMAP-Rule" id="MF_03109"/>
    </source>
</evidence>
<evidence type="ECO:0000255" key="2">
    <source>
        <dbReference type="PROSITE-ProRule" id="PRU01052"/>
    </source>
</evidence>
<evidence type="ECO:0000256" key="3">
    <source>
        <dbReference type="SAM" id="MobiDB-lite"/>
    </source>
</evidence>
<name>SEY1_PENRW</name>
<comment type="function">
    <text evidence="1">Cooperates with the reticulon proteins and tubule-shaping DP1 family proteins to generate and maintain the structure of the tubular endoplasmic reticulum network. Has GTPase activity, which is required for its function in ER organization.</text>
</comment>
<comment type="subcellular location">
    <subcellularLocation>
        <location evidence="1">Endoplasmic reticulum membrane</location>
        <topology evidence="1">Multi-pass membrane protein</topology>
    </subcellularLocation>
    <text evidence="1">Enriched in the cortical ER. Concentrated in punctae along the ER tubules.</text>
</comment>
<comment type="similarity">
    <text evidence="2">Belongs to the TRAFAC class dynamin-like GTPase superfamily. GB1/RHD3 GTPase family. RHD3 subfamily.</text>
</comment>
<organism>
    <name type="scientific">Penicillium rubens (strain ATCC 28089 / DSM 1075 / NRRL 1951 / Wisconsin 54-1255)</name>
    <name type="common">Penicillium chrysogenum</name>
    <dbReference type="NCBI Taxonomy" id="500485"/>
    <lineage>
        <taxon>Eukaryota</taxon>
        <taxon>Fungi</taxon>
        <taxon>Dikarya</taxon>
        <taxon>Ascomycota</taxon>
        <taxon>Pezizomycotina</taxon>
        <taxon>Eurotiomycetes</taxon>
        <taxon>Eurotiomycetidae</taxon>
        <taxon>Eurotiales</taxon>
        <taxon>Aspergillaceae</taxon>
        <taxon>Penicillium</taxon>
        <taxon>Penicillium chrysogenum species complex</taxon>
    </lineage>
</organism>
<keyword id="KW-0175">Coiled coil</keyword>
<keyword id="KW-0256">Endoplasmic reticulum</keyword>
<keyword id="KW-0342">GTP-binding</keyword>
<keyword id="KW-0378">Hydrolase</keyword>
<keyword id="KW-0472">Membrane</keyword>
<keyword id="KW-0547">Nucleotide-binding</keyword>
<keyword id="KW-1185">Reference proteome</keyword>
<keyword id="KW-0812">Transmembrane</keyword>
<keyword id="KW-1133">Transmembrane helix</keyword>
<protein>
    <recommendedName>
        <fullName evidence="1">Protein sey1</fullName>
        <ecNumber evidence="1">3.6.5.-</ecNumber>
    </recommendedName>
</protein>
<dbReference type="EC" id="3.6.5.-" evidence="1"/>
<dbReference type="EMBL" id="AM920427">
    <property type="protein sequence ID" value="CAP81125.1"/>
    <property type="molecule type" value="Genomic_DNA"/>
</dbReference>
<dbReference type="RefSeq" id="XP_002558301.1">
    <property type="nucleotide sequence ID" value="XM_002558255.1"/>
</dbReference>
<dbReference type="SMR" id="B6GX67"/>
<dbReference type="STRING" id="500485.B6GX67"/>
<dbReference type="VEuPathDB" id="FungiDB:PCH_Pc12g14980"/>
<dbReference type="eggNOG" id="KOG2203">
    <property type="taxonomic scope" value="Eukaryota"/>
</dbReference>
<dbReference type="HOGENOM" id="CLU_011270_0_0_1"/>
<dbReference type="OMA" id="PIIKMTE"/>
<dbReference type="OrthoDB" id="1597724at2759"/>
<dbReference type="BioCyc" id="PCHR:PC12G14980-MONOMER"/>
<dbReference type="Proteomes" id="UP000000724">
    <property type="component" value="Contig Pc00c12"/>
</dbReference>
<dbReference type="GO" id="GO:0005789">
    <property type="term" value="C:endoplasmic reticulum membrane"/>
    <property type="evidence" value="ECO:0007669"/>
    <property type="project" value="UniProtKB-SubCell"/>
</dbReference>
<dbReference type="GO" id="GO:0005525">
    <property type="term" value="F:GTP binding"/>
    <property type="evidence" value="ECO:0007669"/>
    <property type="project" value="UniProtKB-UniRule"/>
</dbReference>
<dbReference type="GO" id="GO:0003924">
    <property type="term" value="F:GTPase activity"/>
    <property type="evidence" value="ECO:0007669"/>
    <property type="project" value="UniProtKB-UniRule"/>
</dbReference>
<dbReference type="GO" id="GO:0016320">
    <property type="term" value="P:endoplasmic reticulum membrane fusion"/>
    <property type="evidence" value="ECO:0007669"/>
    <property type="project" value="TreeGrafter"/>
</dbReference>
<dbReference type="CDD" id="cd01851">
    <property type="entry name" value="GBP"/>
    <property type="match status" value="1"/>
</dbReference>
<dbReference type="FunFam" id="3.40.50.300:FF:000727">
    <property type="entry name" value="Protein SEY1 homolog"/>
    <property type="match status" value="1"/>
</dbReference>
<dbReference type="Gene3D" id="3.40.50.300">
    <property type="entry name" value="P-loop containing nucleotide triphosphate hydrolases"/>
    <property type="match status" value="1"/>
</dbReference>
<dbReference type="HAMAP" id="MF_03109">
    <property type="entry name" value="Sey1"/>
    <property type="match status" value="1"/>
</dbReference>
<dbReference type="InterPro" id="IPR030386">
    <property type="entry name" value="G_GB1_RHD3_dom"/>
</dbReference>
<dbReference type="InterPro" id="IPR027417">
    <property type="entry name" value="P-loop_NTPase"/>
</dbReference>
<dbReference type="InterPro" id="IPR008803">
    <property type="entry name" value="RHD3/Sey1"/>
</dbReference>
<dbReference type="InterPro" id="IPR046758">
    <property type="entry name" value="Sey1/RHD3-like_3HB"/>
</dbReference>
<dbReference type="PANTHER" id="PTHR45923">
    <property type="entry name" value="PROTEIN SEY1"/>
    <property type="match status" value="1"/>
</dbReference>
<dbReference type="PANTHER" id="PTHR45923:SF2">
    <property type="entry name" value="PROTEIN SEY1"/>
    <property type="match status" value="1"/>
</dbReference>
<dbReference type="Pfam" id="PF05879">
    <property type="entry name" value="RHD3_GTPase"/>
    <property type="match status" value="1"/>
</dbReference>
<dbReference type="Pfam" id="PF20428">
    <property type="entry name" value="Sey1_3HB"/>
    <property type="match status" value="1"/>
</dbReference>
<dbReference type="SUPFAM" id="SSF52540">
    <property type="entry name" value="P-loop containing nucleoside triphosphate hydrolases"/>
    <property type="match status" value="1"/>
</dbReference>
<dbReference type="PROSITE" id="PS51715">
    <property type="entry name" value="G_GB1_RHD3"/>
    <property type="match status" value="1"/>
</dbReference>
<gene>
    <name type="primary">sey1</name>
    <name type="ORF">Pc12g14980</name>
</gene>
<sequence>MAERRPSGLERSPTAPPVLSNGHFASIGAEGDASSYEHGVQVIDENKEFNPDLSKYLSLENVTPAGFNYHLISVFGSQSTGKSTLLNHLFGTQFSVMSELERRQTTKGIWLSNNKKQGDAGSAERMADNILVMDVEGTDGRERGEDQDFERKSALFALATSEVLIVNIWEHQVGLYQGANMGLLKTVFEVNLQLFLKDKHTTHRSLLFFVIRDFIGTTPLKNLQKTLLEDLSRLWDTISKPAGLEKSTIHDYFDFQFYGLPHKGYQPDQFVTEANKLGLRFREGHRDPKRDALKGEFSEGGVFLPEYHRRIPADGFSHYAEGIWDQIVNNKDLDLPTQQELLAQFRCDEILREVMIGFDEAITAFEDKQAESVRVGAPEVLGGLGVAMRAARVKTLKSFETEASRYHKGVYQRKSAELQGKVDTRLKALFHGQLSAAHKSGIRDFSDSVSAAVKDGQKKGGSYDFAEIVAKETQSSLEKFEEVAHSTLVDGASWSNCTQELSLFKKELAEVSARLRRDEMRRLATRVERWVQSRLGESVGLEFNALGSGRAGGGAPENGEKPTEKDFWDRIWNLFEETVLDAERRFTDRASSFDASIDEVDVGLWRLRRKSWGVLRAKIEEEMIEGNLLLKLRENFEDKFRYDEAGVPRIWRPTDDIEGIYTRARESTLTVIPLLSRFRLERTTAPPPLDRWIGHTPSTATPADEEDLAPIGGVDEHEGKSLEEEMTILSDAKRQELTVRFKKAADGVYVEAKRSAIGGMTQVPLYFYGLLLALGWNEIWAVLRNPAYFILLFAFAIGAYITYQLNLWGPMLKMTEAASQQALEEGKRRLREFLESSDTGRQAIAMSAGERAGSSGRKEEYEMSDMQKRASNANDDLDDM</sequence>
<reference key="1">
    <citation type="journal article" date="2008" name="Nat. Biotechnol.">
        <title>Genome sequencing and analysis of the filamentous fungus Penicillium chrysogenum.</title>
        <authorList>
            <person name="van den Berg M.A."/>
            <person name="Albang R."/>
            <person name="Albermann K."/>
            <person name="Badger J.H."/>
            <person name="Daran J.-M."/>
            <person name="Driessen A.J.M."/>
            <person name="Garcia-Estrada C."/>
            <person name="Fedorova N.D."/>
            <person name="Harris D.M."/>
            <person name="Heijne W.H.M."/>
            <person name="Joardar V.S."/>
            <person name="Kiel J.A.K.W."/>
            <person name="Kovalchuk A."/>
            <person name="Martin J.F."/>
            <person name="Nierman W.C."/>
            <person name="Nijland J.G."/>
            <person name="Pronk J.T."/>
            <person name="Roubos J.A."/>
            <person name="van der Klei I.J."/>
            <person name="van Peij N.N.M.E."/>
            <person name="Veenhuis M."/>
            <person name="von Doehren H."/>
            <person name="Wagner C."/>
            <person name="Wortman J.R."/>
            <person name="Bovenberg R.A.L."/>
        </authorList>
    </citation>
    <scope>NUCLEOTIDE SEQUENCE [LARGE SCALE GENOMIC DNA]</scope>
    <source>
        <strain>ATCC 28089 / DSM 1075 / NRRL 1951 / Wisconsin 54-1255</strain>
    </source>
</reference>
<feature type="chain" id="PRO_0000384992" description="Protein sey1">
    <location>
        <begin position="1"/>
        <end position="880"/>
    </location>
</feature>
<feature type="topological domain" description="Cytoplasmic" evidence="1">
    <location>
        <begin position="1"/>
        <end position="762"/>
    </location>
</feature>
<feature type="transmembrane region" description="Helical" evidence="1">
    <location>
        <begin position="763"/>
        <end position="783"/>
    </location>
</feature>
<feature type="topological domain" description="Lumenal" evidence="1">
    <location>
        <begin position="784"/>
        <end position="786"/>
    </location>
</feature>
<feature type="transmembrane region" description="Helical" evidence="1">
    <location>
        <begin position="787"/>
        <end position="807"/>
    </location>
</feature>
<feature type="topological domain" description="Cytoplasmic" evidence="1">
    <location>
        <begin position="808"/>
        <end position="880"/>
    </location>
</feature>
<feature type="domain" description="GB1/RHD3-type G" evidence="2">
    <location>
        <begin position="66"/>
        <end position="320"/>
    </location>
</feature>
<feature type="region of interest" description="Disordered" evidence="3">
    <location>
        <begin position="1"/>
        <end position="22"/>
    </location>
</feature>
<feature type="region of interest" description="Disordered" evidence="3">
    <location>
        <begin position="836"/>
        <end position="880"/>
    </location>
</feature>
<feature type="coiled-coil region" evidence="1">
    <location>
        <begin position="496"/>
        <end position="519"/>
    </location>
</feature>
<feature type="coiled-coil region" evidence="1">
    <location>
        <begin position="856"/>
        <end position="880"/>
    </location>
</feature>
<feature type="compositionally biased region" description="Basic and acidic residues" evidence="3">
    <location>
        <begin position="856"/>
        <end position="868"/>
    </location>
</feature>
<feature type="binding site" evidence="1">
    <location>
        <begin position="76"/>
        <end position="83"/>
    </location>
    <ligand>
        <name>GTP</name>
        <dbReference type="ChEBI" id="CHEBI:37565"/>
    </ligand>
</feature>